<gene>
    <name type="ORF">pi015</name>
    <name type="ORF">SPBC32H8.09</name>
</gene>
<protein>
    <recommendedName>
        <fullName>Uncharacterized WD repeat-containing protein C32H8.09</fullName>
    </recommendedName>
</protein>
<proteinExistence type="predicted"/>
<name>YNH9_SCHPO</name>
<reference key="1">
    <citation type="journal article" date="2000" name="Yeast">
        <title>A 38 kb segment containing the cdc2 gene from the left arm of fission yeast chromosome II: sequence analysis and characterization of the genomic DNA and cDNAs encoded on the segment.</title>
        <authorList>
            <person name="Machida M."/>
            <person name="Yamazaki S."/>
            <person name="Kunihiro S."/>
            <person name="Tanaka T."/>
            <person name="Kushida N."/>
            <person name="Jinno K."/>
            <person name="Haikawa Y."/>
            <person name="Yamazaki J."/>
            <person name="Yamamoto S."/>
            <person name="Sekine M."/>
            <person name="Oguchi A."/>
            <person name="Nagai Y."/>
            <person name="Sakai M."/>
            <person name="Aoki K."/>
            <person name="Ogura K."/>
            <person name="Kudoh Y."/>
            <person name="Kikuchi H."/>
            <person name="Zhang M.Q."/>
            <person name="Yanagida M."/>
        </authorList>
    </citation>
    <scope>NUCLEOTIDE SEQUENCE [LARGE SCALE GENOMIC DNA]</scope>
    <source>
        <strain>972 / ATCC 24843</strain>
    </source>
</reference>
<reference key="2">
    <citation type="journal article" date="2002" name="Nature">
        <title>The genome sequence of Schizosaccharomyces pombe.</title>
        <authorList>
            <person name="Wood V."/>
            <person name="Gwilliam R."/>
            <person name="Rajandream M.A."/>
            <person name="Lyne M.H."/>
            <person name="Lyne R."/>
            <person name="Stewart A."/>
            <person name="Sgouros J.G."/>
            <person name="Peat N."/>
            <person name="Hayles J."/>
            <person name="Baker S.G."/>
            <person name="Basham D."/>
            <person name="Bowman S."/>
            <person name="Brooks K."/>
            <person name="Brown D."/>
            <person name="Brown S."/>
            <person name="Chillingworth T."/>
            <person name="Churcher C.M."/>
            <person name="Collins M."/>
            <person name="Connor R."/>
            <person name="Cronin A."/>
            <person name="Davis P."/>
            <person name="Feltwell T."/>
            <person name="Fraser A."/>
            <person name="Gentles S."/>
            <person name="Goble A."/>
            <person name="Hamlin N."/>
            <person name="Harris D.E."/>
            <person name="Hidalgo J."/>
            <person name="Hodgson G."/>
            <person name="Holroyd S."/>
            <person name="Hornsby T."/>
            <person name="Howarth S."/>
            <person name="Huckle E.J."/>
            <person name="Hunt S."/>
            <person name="Jagels K."/>
            <person name="James K.D."/>
            <person name="Jones L."/>
            <person name="Jones M."/>
            <person name="Leather S."/>
            <person name="McDonald S."/>
            <person name="McLean J."/>
            <person name="Mooney P."/>
            <person name="Moule S."/>
            <person name="Mungall K.L."/>
            <person name="Murphy L.D."/>
            <person name="Niblett D."/>
            <person name="Odell C."/>
            <person name="Oliver K."/>
            <person name="O'Neil S."/>
            <person name="Pearson D."/>
            <person name="Quail M.A."/>
            <person name="Rabbinowitsch E."/>
            <person name="Rutherford K.M."/>
            <person name="Rutter S."/>
            <person name="Saunders D."/>
            <person name="Seeger K."/>
            <person name="Sharp S."/>
            <person name="Skelton J."/>
            <person name="Simmonds M.N."/>
            <person name="Squares R."/>
            <person name="Squares S."/>
            <person name="Stevens K."/>
            <person name="Taylor K."/>
            <person name="Taylor R.G."/>
            <person name="Tivey A."/>
            <person name="Walsh S.V."/>
            <person name="Warren T."/>
            <person name="Whitehead S."/>
            <person name="Woodward J.R."/>
            <person name="Volckaert G."/>
            <person name="Aert R."/>
            <person name="Robben J."/>
            <person name="Grymonprez B."/>
            <person name="Weltjens I."/>
            <person name="Vanstreels E."/>
            <person name="Rieger M."/>
            <person name="Schaefer M."/>
            <person name="Mueller-Auer S."/>
            <person name="Gabel C."/>
            <person name="Fuchs M."/>
            <person name="Duesterhoeft A."/>
            <person name="Fritzc C."/>
            <person name="Holzer E."/>
            <person name="Moestl D."/>
            <person name="Hilbert H."/>
            <person name="Borzym K."/>
            <person name="Langer I."/>
            <person name="Beck A."/>
            <person name="Lehrach H."/>
            <person name="Reinhardt R."/>
            <person name="Pohl T.M."/>
            <person name="Eger P."/>
            <person name="Zimmermann W."/>
            <person name="Wedler H."/>
            <person name="Wambutt R."/>
            <person name="Purnelle B."/>
            <person name="Goffeau A."/>
            <person name="Cadieu E."/>
            <person name="Dreano S."/>
            <person name="Gloux S."/>
            <person name="Lelaure V."/>
            <person name="Mottier S."/>
            <person name="Galibert F."/>
            <person name="Aves S.J."/>
            <person name="Xiang Z."/>
            <person name="Hunt C."/>
            <person name="Moore K."/>
            <person name="Hurst S.M."/>
            <person name="Lucas M."/>
            <person name="Rochet M."/>
            <person name="Gaillardin C."/>
            <person name="Tallada V.A."/>
            <person name="Garzon A."/>
            <person name="Thode G."/>
            <person name="Daga R.R."/>
            <person name="Cruzado L."/>
            <person name="Jimenez J."/>
            <person name="Sanchez M."/>
            <person name="del Rey F."/>
            <person name="Benito J."/>
            <person name="Dominguez A."/>
            <person name="Revuelta J.L."/>
            <person name="Moreno S."/>
            <person name="Armstrong J."/>
            <person name="Forsburg S.L."/>
            <person name="Cerutti L."/>
            <person name="Lowe T."/>
            <person name="McCombie W.R."/>
            <person name="Paulsen I."/>
            <person name="Potashkin J."/>
            <person name="Shpakovski G.V."/>
            <person name="Ussery D."/>
            <person name="Barrell B.G."/>
            <person name="Nurse P."/>
        </authorList>
    </citation>
    <scope>NUCLEOTIDE SEQUENCE [LARGE SCALE GENOMIC DNA]</scope>
    <source>
        <strain>972 / ATCC 24843</strain>
    </source>
</reference>
<dbReference type="EMBL" id="AB004534">
    <property type="protein sequence ID" value="BAA21392.2"/>
    <property type="molecule type" value="Genomic_DNA"/>
</dbReference>
<dbReference type="EMBL" id="AB004535">
    <property type="protein sequence ID" value="BAA21394.1"/>
    <property type="molecule type" value="Genomic_DNA"/>
</dbReference>
<dbReference type="EMBL" id="CU329671">
    <property type="protein sequence ID" value="CAC37499.1"/>
    <property type="molecule type" value="Genomic_DNA"/>
</dbReference>
<dbReference type="SMR" id="Q96WW0"/>
<dbReference type="BioGRID" id="276760">
    <property type="interactions" value="3"/>
</dbReference>
<dbReference type="FunCoup" id="Q96WW0">
    <property type="interactions" value="108"/>
</dbReference>
<dbReference type="STRING" id="284812.Q96WW0"/>
<dbReference type="PaxDb" id="4896-SPBC32H8.09.1"/>
<dbReference type="EnsemblFungi" id="SPBC32H8.09.1">
    <property type="protein sequence ID" value="SPBC32H8.09.1:pep"/>
    <property type="gene ID" value="SPBC32H8.09"/>
</dbReference>
<dbReference type="KEGG" id="spo:2540228"/>
<dbReference type="PomBase" id="SPBC32H8.09"/>
<dbReference type="VEuPathDB" id="FungiDB:SPBC32H8.09"/>
<dbReference type="eggNOG" id="KOG4497">
    <property type="taxonomic scope" value="Eukaryota"/>
</dbReference>
<dbReference type="HOGENOM" id="CLU_024072_2_0_1"/>
<dbReference type="InParanoid" id="Q96WW0"/>
<dbReference type="OMA" id="CWHLNGD"/>
<dbReference type="PhylomeDB" id="Q96WW0"/>
<dbReference type="PRO" id="PR:Q96WW0"/>
<dbReference type="Proteomes" id="UP000002485">
    <property type="component" value="Chromosome II"/>
</dbReference>
<dbReference type="GO" id="GO:0005829">
    <property type="term" value="C:cytosol"/>
    <property type="evidence" value="ECO:0007005"/>
    <property type="project" value="PomBase"/>
</dbReference>
<dbReference type="GO" id="GO:0005815">
    <property type="term" value="C:microtubule organizing center"/>
    <property type="evidence" value="ECO:0000318"/>
    <property type="project" value="GO_Central"/>
</dbReference>
<dbReference type="GO" id="GO:0072686">
    <property type="term" value="C:mitotic spindle"/>
    <property type="evidence" value="ECO:0000314"/>
    <property type="project" value="PomBase"/>
</dbReference>
<dbReference type="GO" id="GO:0044732">
    <property type="term" value="C:mitotic spindle pole body"/>
    <property type="evidence" value="ECO:0000314"/>
    <property type="project" value="PomBase"/>
</dbReference>
<dbReference type="GO" id="GO:1990811">
    <property type="term" value="C:MWP complex"/>
    <property type="evidence" value="ECO:0000314"/>
    <property type="project" value="PomBase"/>
</dbReference>
<dbReference type="GO" id="GO:0005634">
    <property type="term" value="C:nucleus"/>
    <property type="evidence" value="ECO:0000314"/>
    <property type="project" value="PomBase"/>
</dbReference>
<dbReference type="GO" id="GO:1990810">
    <property type="term" value="P:microtubule anchoring at mitotic spindle pole body"/>
    <property type="evidence" value="ECO:0000315"/>
    <property type="project" value="PomBase"/>
</dbReference>
<dbReference type="GO" id="GO:0000070">
    <property type="term" value="P:mitotic sister chromatid segregation"/>
    <property type="evidence" value="ECO:0000315"/>
    <property type="project" value="PomBase"/>
</dbReference>
<dbReference type="Gene3D" id="2.130.10.10">
    <property type="entry name" value="YVTN repeat-like/Quinoprotein amine dehydrogenase"/>
    <property type="match status" value="1"/>
</dbReference>
<dbReference type="InterPro" id="IPR052778">
    <property type="entry name" value="Centrosome-WD_assoc"/>
</dbReference>
<dbReference type="InterPro" id="IPR015943">
    <property type="entry name" value="WD40/YVTN_repeat-like_dom_sf"/>
</dbReference>
<dbReference type="InterPro" id="IPR036322">
    <property type="entry name" value="WD40_repeat_dom_sf"/>
</dbReference>
<dbReference type="InterPro" id="IPR001680">
    <property type="entry name" value="WD40_rpt"/>
</dbReference>
<dbReference type="PANTHER" id="PTHR16220">
    <property type="entry name" value="WD REPEAT PROTEIN 8-RELATED"/>
    <property type="match status" value="1"/>
</dbReference>
<dbReference type="PANTHER" id="PTHR16220:SF0">
    <property type="entry name" value="WD REPEAT-CONTAINING PROTEIN WRAP73"/>
    <property type="match status" value="1"/>
</dbReference>
<dbReference type="Pfam" id="PF00400">
    <property type="entry name" value="WD40"/>
    <property type="match status" value="1"/>
</dbReference>
<dbReference type="SMART" id="SM00320">
    <property type="entry name" value="WD40"/>
    <property type="match status" value="1"/>
</dbReference>
<dbReference type="SUPFAM" id="SSF50978">
    <property type="entry name" value="WD40 repeat-like"/>
    <property type="match status" value="2"/>
</dbReference>
<dbReference type="PROSITE" id="PS50082">
    <property type="entry name" value="WD_REPEATS_2"/>
    <property type="match status" value="1"/>
</dbReference>
<dbReference type="PROSITE" id="PS50294">
    <property type="entry name" value="WD_REPEATS_REGION"/>
    <property type="match status" value="1"/>
</dbReference>
<accession>Q96WW0</accession>
<accession>O13608</accession>
<accession>Q9UTS2</accession>
<organism>
    <name type="scientific">Schizosaccharomyces pombe (strain 972 / ATCC 24843)</name>
    <name type="common">Fission yeast</name>
    <dbReference type="NCBI Taxonomy" id="284812"/>
    <lineage>
        <taxon>Eukaryota</taxon>
        <taxon>Fungi</taxon>
        <taxon>Dikarya</taxon>
        <taxon>Ascomycota</taxon>
        <taxon>Taphrinomycotina</taxon>
        <taxon>Schizosaccharomycetes</taxon>
        <taxon>Schizosaccharomycetales</taxon>
        <taxon>Schizosaccharomycetaceae</taxon>
        <taxon>Schizosaccharomyces</taxon>
    </lineage>
</organism>
<sequence>MDFTALFASLNPTFASVSHCGNWIASLSRSGHVLIRNSETLELHHVFLLNAQFIQKVVYLLWKPNLGAEKCHQICVASVDKVFVLDIVQHDYYASIQCDQDPLSSISWSPSGELLLWSSFDSKITVWSLNTQKGYLLPHVKTNVSKVYALHPSMQFCTILSRFNGSDCLQFYQISKKAWILLKECKLPTIDSTGIHWSPDGNWLAVLENVLDAVVYIYHRTGLLFHEYRPNRLIEVGFSDFEWSPFGKYLTLCSYHDSTLHLLETKTFSIVFRLHHCLQYTNTDLEMHIWEEKETIYEQQMTYQKVHKLRTDFPEPSFCSASKIRFNCDETYAATITSKYPNVLWLWNLQNKKLHTVLIQKHHIVYFEWHPGRPDLVVIQTKIRKESKIPSNATFLYFWALSWNTPRVVGVPKKGFNIQKVQWLQPSEFSSRPVIVICGEDAYTVAYIVEDEDESFTEVTQTIISQEVLDNELETTQTISIPS</sequence>
<feature type="chain" id="PRO_0000051498" description="Uncharacterized WD repeat-containing protein C32H8.09">
    <location>
        <begin position="1"/>
        <end position="483"/>
    </location>
</feature>
<feature type="repeat" description="WD">
    <location>
        <begin position="96"/>
        <end position="137"/>
    </location>
</feature>
<keyword id="KW-1185">Reference proteome</keyword>
<keyword id="KW-0853">WD repeat</keyword>